<feature type="chain" id="PRO_1000120677" description="Small ribosomal subunit protein bS21">
    <location>
        <begin position="1"/>
        <end position="71"/>
    </location>
</feature>
<feature type="region of interest" description="Disordered" evidence="2">
    <location>
        <begin position="38"/>
        <end position="71"/>
    </location>
</feature>
<feature type="compositionally biased region" description="Basic residues" evidence="2">
    <location>
        <begin position="43"/>
        <end position="59"/>
    </location>
</feature>
<feature type="compositionally biased region" description="Basic and acidic residues" evidence="2">
    <location>
        <begin position="60"/>
        <end position="71"/>
    </location>
</feature>
<evidence type="ECO:0000255" key="1">
    <source>
        <dbReference type="HAMAP-Rule" id="MF_00358"/>
    </source>
</evidence>
<evidence type="ECO:0000256" key="2">
    <source>
        <dbReference type="SAM" id="MobiDB-lite"/>
    </source>
</evidence>
<evidence type="ECO:0000305" key="3"/>
<gene>
    <name evidence="1" type="primary">rpsU</name>
    <name type="ordered locus">VFMJ11_2361</name>
</gene>
<reference key="1">
    <citation type="submission" date="2008-08" db="EMBL/GenBank/DDBJ databases">
        <title>Complete sequence of Vibrio fischeri strain MJ11.</title>
        <authorList>
            <person name="Mandel M.J."/>
            <person name="Stabb E.V."/>
            <person name="Ruby E.G."/>
            <person name="Ferriera S."/>
            <person name="Johnson J."/>
            <person name="Kravitz S."/>
            <person name="Beeson K."/>
            <person name="Sutton G."/>
            <person name="Rogers Y.-H."/>
            <person name="Friedman R."/>
            <person name="Frazier M."/>
            <person name="Venter J.C."/>
        </authorList>
    </citation>
    <scope>NUCLEOTIDE SEQUENCE [LARGE SCALE GENOMIC DNA]</scope>
    <source>
        <strain>MJ11</strain>
    </source>
</reference>
<proteinExistence type="inferred from homology"/>
<keyword id="KW-0687">Ribonucleoprotein</keyword>
<keyword id="KW-0689">Ribosomal protein</keyword>
<dbReference type="EMBL" id="CP001139">
    <property type="protein sequence ID" value="ACH65576.1"/>
    <property type="molecule type" value="Genomic_DNA"/>
</dbReference>
<dbReference type="RefSeq" id="WP_005421025.1">
    <property type="nucleotide sequence ID" value="NC_011184.1"/>
</dbReference>
<dbReference type="SMR" id="B5FB83"/>
<dbReference type="GeneID" id="77306663"/>
<dbReference type="KEGG" id="vfm:VFMJ11_2361"/>
<dbReference type="HOGENOM" id="CLU_159258_1_0_6"/>
<dbReference type="Proteomes" id="UP000001857">
    <property type="component" value="Chromosome I"/>
</dbReference>
<dbReference type="GO" id="GO:1990904">
    <property type="term" value="C:ribonucleoprotein complex"/>
    <property type="evidence" value="ECO:0007669"/>
    <property type="project" value="UniProtKB-KW"/>
</dbReference>
<dbReference type="GO" id="GO:0005840">
    <property type="term" value="C:ribosome"/>
    <property type="evidence" value="ECO:0007669"/>
    <property type="project" value="UniProtKB-KW"/>
</dbReference>
<dbReference type="GO" id="GO:0003735">
    <property type="term" value="F:structural constituent of ribosome"/>
    <property type="evidence" value="ECO:0007669"/>
    <property type="project" value="InterPro"/>
</dbReference>
<dbReference type="GO" id="GO:0006412">
    <property type="term" value="P:translation"/>
    <property type="evidence" value="ECO:0007669"/>
    <property type="project" value="UniProtKB-UniRule"/>
</dbReference>
<dbReference type="FunFam" id="1.20.5.1150:FF:000001">
    <property type="entry name" value="30S ribosomal protein S21"/>
    <property type="match status" value="1"/>
</dbReference>
<dbReference type="Gene3D" id="1.20.5.1150">
    <property type="entry name" value="Ribosomal protein S8"/>
    <property type="match status" value="1"/>
</dbReference>
<dbReference type="HAMAP" id="MF_00358">
    <property type="entry name" value="Ribosomal_bS21"/>
    <property type="match status" value="1"/>
</dbReference>
<dbReference type="InterPro" id="IPR001911">
    <property type="entry name" value="Ribosomal_bS21"/>
</dbReference>
<dbReference type="InterPro" id="IPR018278">
    <property type="entry name" value="Ribosomal_bS21_CS"/>
</dbReference>
<dbReference type="InterPro" id="IPR038380">
    <property type="entry name" value="Ribosomal_bS21_sf"/>
</dbReference>
<dbReference type="NCBIfam" id="TIGR00030">
    <property type="entry name" value="S21p"/>
    <property type="match status" value="1"/>
</dbReference>
<dbReference type="PANTHER" id="PTHR21109">
    <property type="entry name" value="MITOCHONDRIAL 28S RIBOSOMAL PROTEIN S21"/>
    <property type="match status" value="1"/>
</dbReference>
<dbReference type="PANTHER" id="PTHR21109:SF22">
    <property type="entry name" value="SMALL RIBOSOMAL SUBUNIT PROTEIN BS21"/>
    <property type="match status" value="1"/>
</dbReference>
<dbReference type="Pfam" id="PF01165">
    <property type="entry name" value="Ribosomal_S21"/>
    <property type="match status" value="1"/>
</dbReference>
<dbReference type="PRINTS" id="PR00976">
    <property type="entry name" value="RIBOSOMALS21"/>
</dbReference>
<dbReference type="PROSITE" id="PS01181">
    <property type="entry name" value="RIBOSOMAL_S21"/>
    <property type="match status" value="1"/>
</dbReference>
<sequence length="71" mass="8503">MPVVKVRENEPFDVALRRFKRSCEKAGILSEVRRREHYEKPTTVRKRAKAAAQKRHAKKLSRENARRVRLY</sequence>
<name>RS21_ALIFM</name>
<protein>
    <recommendedName>
        <fullName evidence="1">Small ribosomal subunit protein bS21</fullName>
    </recommendedName>
    <alternativeName>
        <fullName evidence="3">30S ribosomal protein S21</fullName>
    </alternativeName>
</protein>
<accession>B5FB83</accession>
<organism>
    <name type="scientific">Aliivibrio fischeri (strain MJ11)</name>
    <name type="common">Vibrio fischeri</name>
    <dbReference type="NCBI Taxonomy" id="388396"/>
    <lineage>
        <taxon>Bacteria</taxon>
        <taxon>Pseudomonadati</taxon>
        <taxon>Pseudomonadota</taxon>
        <taxon>Gammaproteobacteria</taxon>
        <taxon>Vibrionales</taxon>
        <taxon>Vibrionaceae</taxon>
        <taxon>Aliivibrio</taxon>
    </lineage>
</organism>
<comment type="similarity">
    <text evidence="1">Belongs to the bacterial ribosomal protein bS21 family.</text>
</comment>